<keyword id="KW-0067">ATP-binding</keyword>
<keyword id="KW-0963">Cytoplasm</keyword>
<keyword id="KW-0485">Methanol utilization</keyword>
<keyword id="KW-0547">Nucleotide-binding</keyword>
<name>MOXR_PARDE</name>
<accession>P29901</accession>
<comment type="function">
    <text>May be involved in the regulation of formation of active methanol dehydrogenase.</text>
</comment>
<comment type="subcellular location">
    <subcellularLocation>
        <location>Cytoplasm</location>
    </subcellularLocation>
</comment>
<comment type="similarity">
    <text evidence="2">Belongs to the MoxR family.</text>
</comment>
<protein>
    <recommendedName>
        <fullName>Protein MoxR</fullName>
    </recommendedName>
</protein>
<dbReference type="EMBL" id="M57684">
    <property type="status" value="NOT_ANNOTATED_CDS"/>
    <property type="molecule type" value="Genomic_DNA"/>
</dbReference>
<dbReference type="PIR" id="D41377">
    <property type="entry name" value="D41377"/>
</dbReference>
<dbReference type="RefSeq" id="WP_011749267.1">
    <property type="nucleotide sequence ID" value="NZ_JAOSHR010000012.1"/>
</dbReference>
<dbReference type="SMR" id="P29901"/>
<dbReference type="OMA" id="DRFFMEV"/>
<dbReference type="GO" id="GO:0005737">
    <property type="term" value="C:cytoplasm"/>
    <property type="evidence" value="ECO:0007669"/>
    <property type="project" value="UniProtKB-SubCell"/>
</dbReference>
<dbReference type="GO" id="GO:0005524">
    <property type="term" value="F:ATP binding"/>
    <property type="evidence" value="ECO:0007669"/>
    <property type="project" value="UniProtKB-KW"/>
</dbReference>
<dbReference type="GO" id="GO:0016887">
    <property type="term" value="F:ATP hydrolysis activity"/>
    <property type="evidence" value="ECO:0007669"/>
    <property type="project" value="InterPro"/>
</dbReference>
<dbReference type="GO" id="GO:0015945">
    <property type="term" value="P:methanol metabolic process"/>
    <property type="evidence" value="ECO:0007669"/>
    <property type="project" value="UniProtKB-KW"/>
</dbReference>
<dbReference type="CDD" id="cd00009">
    <property type="entry name" value="AAA"/>
    <property type="match status" value="1"/>
</dbReference>
<dbReference type="Gene3D" id="1.10.8.80">
    <property type="entry name" value="Magnesium chelatase subunit I, C-Terminal domain"/>
    <property type="match status" value="1"/>
</dbReference>
<dbReference type="Gene3D" id="3.40.50.300">
    <property type="entry name" value="P-loop containing nucleotide triphosphate hydrolases"/>
    <property type="match status" value="1"/>
</dbReference>
<dbReference type="InterPro" id="IPR003593">
    <property type="entry name" value="AAA+_ATPase"/>
</dbReference>
<dbReference type="InterPro" id="IPR011703">
    <property type="entry name" value="ATPase_AAA-3"/>
</dbReference>
<dbReference type="InterPro" id="IPR050764">
    <property type="entry name" value="CbbQ/NirQ/NorQ/GpvN"/>
</dbReference>
<dbReference type="InterPro" id="IPR041628">
    <property type="entry name" value="ChlI/MoxR_AAA_lid"/>
</dbReference>
<dbReference type="InterPro" id="IPR001270">
    <property type="entry name" value="ClpA/B"/>
</dbReference>
<dbReference type="InterPro" id="IPR027417">
    <property type="entry name" value="P-loop_NTPase"/>
</dbReference>
<dbReference type="PANTHER" id="PTHR42759:SF1">
    <property type="entry name" value="MAGNESIUM-CHELATASE SUBUNIT CHLD"/>
    <property type="match status" value="1"/>
</dbReference>
<dbReference type="PANTHER" id="PTHR42759">
    <property type="entry name" value="MOXR FAMILY PROTEIN"/>
    <property type="match status" value="1"/>
</dbReference>
<dbReference type="Pfam" id="PF07726">
    <property type="entry name" value="AAA_3"/>
    <property type="match status" value="1"/>
</dbReference>
<dbReference type="Pfam" id="PF17863">
    <property type="entry name" value="AAA_lid_2"/>
    <property type="match status" value="1"/>
</dbReference>
<dbReference type="PIRSF" id="PIRSF002849">
    <property type="entry name" value="AAA_ATPase_chaperone_MoxR_prd"/>
    <property type="match status" value="1"/>
</dbReference>
<dbReference type="PRINTS" id="PR00300">
    <property type="entry name" value="CLPPROTEASEA"/>
</dbReference>
<dbReference type="SMART" id="SM00382">
    <property type="entry name" value="AAA"/>
    <property type="match status" value="1"/>
</dbReference>
<dbReference type="SUPFAM" id="SSF52540">
    <property type="entry name" value="P-loop containing nucleoside triphosphate hydrolases"/>
    <property type="match status" value="1"/>
</dbReference>
<feature type="chain" id="PRO_0000096544" description="Protein MoxR">
    <location>
        <begin position="1"/>
        <end position="339"/>
    </location>
</feature>
<feature type="binding site" evidence="1">
    <location>
        <begin position="47"/>
        <end position="54"/>
    </location>
    <ligand>
        <name>ATP</name>
        <dbReference type="ChEBI" id="CHEBI:30616"/>
    </ligand>
</feature>
<sequence length="339" mass="36923">MDSNISDWHARFRDAEAALNGVVLGQARTIRLLLISALCRGHVLLAGDVGTGKTTLLRAMARALGGPYGRVEGTVDLLPTDLIYSTHIAEDGRPRIEPGPVLEQGEDMAVFFFNEINRARPQVHALLLRLMAERSLSAFRREYRFPHLQVFADRNQIERDETFELPAAARDRFLMEIAVDAPAAPEDRVALAFEPRFHDTTALIAEVGQGILPYRGLNGLAAGVQSGTHASPALRRYVFDLCEALRNPASAGLALEGADAARLIRGGVSPRGMQHLVRAARACAWLEGREAVLPQDVRAVLAPVMAHRIFLSPAYEPRREALVPALIDAAFATIPVPAA</sequence>
<evidence type="ECO:0000255" key="1"/>
<evidence type="ECO:0000305" key="2"/>
<proteinExistence type="inferred from homology"/>
<gene>
    <name type="primary">moxR</name>
</gene>
<reference key="1">
    <citation type="journal article" date="1991" name="J. Bacteriol.">
        <title>Isolation and characterization of the moxJ, moxG, moxI, and moxR genes of Paracoccus denitrificans: inactivation of moxJ, moxG, and moxR and the resultant effect on methylotrophic growth.</title>
        <authorList>
            <person name="van Spanning R.J.M."/>
            <person name="Wansell C.W."/>
            <person name="de Boer T."/>
            <person name="Hazelaar M.J."/>
            <person name="Anazawa H."/>
            <person name="Harms N."/>
            <person name="Oltmann L.F."/>
            <person name="Stouthamer A.H."/>
        </authorList>
    </citation>
    <scope>NUCLEOTIDE SEQUENCE [GENOMIC DNA]</scope>
</reference>
<organism>
    <name type="scientific">Paracoccus denitrificans</name>
    <dbReference type="NCBI Taxonomy" id="266"/>
    <lineage>
        <taxon>Bacteria</taxon>
        <taxon>Pseudomonadati</taxon>
        <taxon>Pseudomonadota</taxon>
        <taxon>Alphaproteobacteria</taxon>
        <taxon>Rhodobacterales</taxon>
        <taxon>Paracoccaceae</taxon>
        <taxon>Paracoccus</taxon>
    </lineage>
</organism>